<dbReference type="EC" id="4.1.3.27"/>
<dbReference type="EMBL" id="AE000782">
    <property type="protein sequence ID" value="AAB89646.1"/>
    <property type="molecule type" value="Genomic_DNA"/>
</dbReference>
<dbReference type="PIR" id="B69450">
    <property type="entry name" value="B69450"/>
</dbReference>
<dbReference type="RefSeq" id="WP_010879100.1">
    <property type="nucleotide sequence ID" value="NC_000917.1"/>
</dbReference>
<dbReference type="SMR" id="O28669"/>
<dbReference type="STRING" id="224325.AF_1603"/>
<dbReference type="PaxDb" id="224325-AF_1603"/>
<dbReference type="EnsemblBacteria" id="AAB89646">
    <property type="protein sequence ID" value="AAB89646"/>
    <property type="gene ID" value="AF_1603"/>
</dbReference>
<dbReference type="GeneID" id="1484829"/>
<dbReference type="KEGG" id="afu:AF_1603"/>
<dbReference type="eggNOG" id="arCOG02014">
    <property type="taxonomic scope" value="Archaea"/>
</dbReference>
<dbReference type="HOGENOM" id="CLU_006493_9_2_2"/>
<dbReference type="OrthoDB" id="25514at2157"/>
<dbReference type="PhylomeDB" id="O28669"/>
<dbReference type="UniPathway" id="UPA00035">
    <property type="reaction ID" value="UER00040"/>
</dbReference>
<dbReference type="Proteomes" id="UP000002199">
    <property type="component" value="Chromosome"/>
</dbReference>
<dbReference type="GO" id="GO:0004049">
    <property type="term" value="F:anthranilate synthase activity"/>
    <property type="evidence" value="ECO:0007669"/>
    <property type="project" value="UniProtKB-EC"/>
</dbReference>
<dbReference type="GO" id="GO:0046872">
    <property type="term" value="F:metal ion binding"/>
    <property type="evidence" value="ECO:0007669"/>
    <property type="project" value="UniProtKB-KW"/>
</dbReference>
<dbReference type="GO" id="GO:0000162">
    <property type="term" value="P:L-tryptophan biosynthetic process"/>
    <property type="evidence" value="ECO:0007669"/>
    <property type="project" value="UniProtKB-UniPathway"/>
</dbReference>
<dbReference type="Gene3D" id="3.60.120.10">
    <property type="entry name" value="Anthranilate synthase"/>
    <property type="match status" value="1"/>
</dbReference>
<dbReference type="InterPro" id="IPR005801">
    <property type="entry name" value="ADC_synthase"/>
</dbReference>
<dbReference type="InterPro" id="IPR019999">
    <property type="entry name" value="Anth_synth_I-like"/>
</dbReference>
<dbReference type="InterPro" id="IPR006805">
    <property type="entry name" value="Anth_synth_I_N"/>
</dbReference>
<dbReference type="InterPro" id="IPR010116">
    <property type="entry name" value="Anthranilate_synth_I_arc_typ"/>
</dbReference>
<dbReference type="InterPro" id="IPR015890">
    <property type="entry name" value="Chorismate_C"/>
</dbReference>
<dbReference type="NCBIfam" id="NF010087">
    <property type="entry name" value="PRK13572.1"/>
    <property type="match status" value="1"/>
</dbReference>
<dbReference type="NCBIfam" id="TIGR01820">
    <property type="entry name" value="TrpE-arch"/>
    <property type="match status" value="1"/>
</dbReference>
<dbReference type="PANTHER" id="PTHR11236">
    <property type="entry name" value="AMINOBENZOATE/ANTHRANILATE SYNTHASE"/>
    <property type="match status" value="1"/>
</dbReference>
<dbReference type="PANTHER" id="PTHR11236:SF9">
    <property type="entry name" value="ANTHRANILATE SYNTHASE COMPONENT 1"/>
    <property type="match status" value="1"/>
</dbReference>
<dbReference type="Pfam" id="PF04715">
    <property type="entry name" value="Anth_synt_I_N"/>
    <property type="match status" value="1"/>
</dbReference>
<dbReference type="Pfam" id="PF00425">
    <property type="entry name" value="Chorismate_bind"/>
    <property type="match status" value="1"/>
</dbReference>
<dbReference type="PRINTS" id="PR00095">
    <property type="entry name" value="ANTSNTHASEI"/>
</dbReference>
<dbReference type="SUPFAM" id="SSF56322">
    <property type="entry name" value="ADC synthase"/>
    <property type="match status" value="1"/>
</dbReference>
<name>TRPE_ARCFU</name>
<organism>
    <name type="scientific">Archaeoglobus fulgidus (strain ATCC 49558 / DSM 4304 / JCM 9628 / NBRC 100126 / VC-16)</name>
    <dbReference type="NCBI Taxonomy" id="224325"/>
    <lineage>
        <taxon>Archaea</taxon>
        <taxon>Methanobacteriati</taxon>
        <taxon>Methanobacteriota</taxon>
        <taxon>Archaeoglobi</taxon>
        <taxon>Archaeoglobales</taxon>
        <taxon>Archaeoglobaceae</taxon>
        <taxon>Archaeoglobus</taxon>
    </lineage>
</organism>
<keyword id="KW-0028">Amino-acid biosynthesis</keyword>
<keyword id="KW-0057">Aromatic amino acid biosynthesis</keyword>
<keyword id="KW-0456">Lyase</keyword>
<keyword id="KW-0460">Magnesium</keyword>
<keyword id="KW-0479">Metal-binding</keyword>
<keyword id="KW-1185">Reference proteome</keyword>
<keyword id="KW-0822">Tryptophan biosynthesis</keyword>
<protein>
    <recommendedName>
        <fullName>Anthranilate synthase component 1</fullName>
        <shortName>AS</shortName>
        <shortName>ASI</shortName>
        <ecNumber>4.1.3.27</ecNumber>
    </recommendedName>
</protein>
<comment type="function">
    <text evidence="1">Part of a heterotetrameric complex that catalyzes the two-step biosynthesis of anthranilate, an intermediate in the biosynthesis of L-tryptophan. In the first step, the glutamine-binding beta subunit (TrpG) of anthranilate synthase (AS) provides the glutamine amidotransferase activity which generates ammonia as a substrate that, along with chorismate, is used in the second step, catalyzed by the large alpha subunit of AS (TrpE) to produce anthranilate. In the absence of TrpG, TrpE can synthesize anthranilate directly from chorismate and high concentrations of ammonia (By similarity).</text>
</comment>
<comment type="catalytic activity">
    <reaction>
        <text>chorismate + L-glutamine = anthranilate + pyruvate + L-glutamate + H(+)</text>
        <dbReference type="Rhea" id="RHEA:21732"/>
        <dbReference type="ChEBI" id="CHEBI:15361"/>
        <dbReference type="ChEBI" id="CHEBI:15378"/>
        <dbReference type="ChEBI" id="CHEBI:16567"/>
        <dbReference type="ChEBI" id="CHEBI:29748"/>
        <dbReference type="ChEBI" id="CHEBI:29985"/>
        <dbReference type="ChEBI" id="CHEBI:58359"/>
        <dbReference type="EC" id="4.1.3.27"/>
    </reaction>
</comment>
<comment type="cofactor">
    <cofactor evidence="2">
        <name>Mg(2+)</name>
        <dbReference type="ChEBI" id="CHEBI:18420"/>
    </cofactor>
    <text evidence="2">Binds 1 Mg(2+) ion per subunit.</text>
</comment>
<comment type="activity regulation">
    <text evidence="1">Feedback inhibited by tryptophan.</text>
</comment>
<comment type="pathway">
    <text>Amino-acid biosynthesis; L-tryptophan biosynthesis; L-tryptophan from chorismate: step 1/5.</text>
</comment>
<comment type="subunit">
    <text evidence="1">Heterotetramer consisting of two non-identical subunits: a beta subunit (TrpG) and a large alpha subunit (TrpE).</text>
</comment>
<comment type="similarity">
    <text evidence="3">Belongs to the anthranilate synthase component I family.</text>
</comment>
<accession>O28669</accession>
<proteinExistence type="inferred from homology"/>
<evidence type="ECO:0000250" key="1"/>
<evidence type="ECO:0000250" key="2">
    <source>
        <dbReference type="UniProtKB" id="P00897"/>
    </source>
</evidence>
<evidence type="ECO:0000305" key="3"/>
<gene>
    <name type="primary">trpE</name>
    <name type="ordered locus">AF_1603</name>
</gene>
<reference key="1">
    <citation type="journal article" date="1997" name="Nature">
        <title>The complete genome sequence of the hyperthermophilic, sulphate-reducing archaeon Archaeoglobus fulgidus.</title>
        <authorList>
            <person name="Klenk H.-P."/>
            <person name="Clayton R.A."/>
            <person name="Tomb J.-F."/>
            <person name="White O."/>
            <person name="Nelson K.E."/>
            <person name="Ketchum K.A."/>
            <person name="Dodson R.J."/>
            <person name="Gwinn M.L."/>
            <person name="Hickey E.K."/>
            <person name="Peterson J.D."/>
            <person name="Richardson D.L."/>
            <person name="Kerlavage A.R."/>
            <person name="Graham D.E."/>
            <person name="Kyrpides N.C."/>
            <person name="Fleischmann R.D."/>
            <person name="Quackenbush J."/>
            <person name="Lee N.H."/>
            <person name="Sutton G.G."/>
            <person name="Gill S.R."/>
            <person name="Kirkness E.F."/>
            <person name="Dougherty B.A."/>
            <person name="McKenney K."/>
            <person name="Adams M.D."/>
            <person name="Loftus B.J."/>
            <person name="Peterson S.N."/>
            <person name="Reich C.I."/>
            <person name="McNeil L.K."/>
            <person name="Badger J.H."/>
            <person name="Glodek A."/>
            <person name="Zhou L."/>
            <person name="Overbeek R."/>
            <person name="Gocayne J.D."/>
            <person name="Weidman J.F."/>
            <person name="McDonald L.A."/>
            <person name="Utterback T.R."/>
            <person name="Cotton M.D."/>
            <person name="Spriggs T."/>
            <person name="Artiach P."/>
            <person name="Kaine B.P."/>
            <person name="Sykes S.M."/>
            <person name="Sadow P.W."/>
            <person name="D'Andrea K.P."/>
            <person name="Bowman C."/>
            <person name="Fujii C."/>
            <person name="Garland S.A."/>
            <person name="Mason T.M."/>
            <person name="Olsen G.J."/>
            <person name="Fraser C.M."/>
            <person name="Smith H.O."/>
            <person name="Woese C.R."/>
            <person name="Venter J.C."/>
        </authorList>
    </citation>
    <scope>NUCLEOTIDE SEQUENCE [LARGE SCALE GENOMIC DNA]</scope>
    <source>
        <strain>ATCC 49558 / DSM 4304 / JCM 9628 / NBRC 100126 / VC-16</strain>
    </source>
</reference>
<sequence length="411" mass="46346">MQKHEYVNPVKLYSAIRDEKFPFILESAEKSGRARYTYISFNPLYTVRVGSRTRVDGEVISKISDPFDALNEIHVKGLLVGYVAYEAVKNYIGKKPQTPSVFGCYDGYFVYDHYLRKLFSVNVENADKIVERAKRVEVEQVRGNSEVLRAGSREKFEKMVERGKEQIFEGEVYQIVLSREYVVDTDLSPFQMYLNLRETNPSPYMFLLEFDRALIGSSPETMGRVEGNSFIINPIAGTARREAGREKEIAEKLLSDEKERAEHVMLVDLARNDVRKVCRAGSVRVSRFMEVVEYPSVLHIESEVVGELKAGVTHFDAMKATFPAGTVTGAPKLRAIELIDEIEGDCRGVYAGAVGYFSENVSDLAIAIRMIEFDGKARIRAGAGIVADSVPEREFFETENKIARVLRAVGL</sequence>
<feature type="chain" id="PRO_0000154121" description="Anthranilate synthase component 1">
    <location>
        <begin position="1"/>
        <end position="411"/>
    </location>
</feature>
<feature type="binding site" evidence="2">
    <location>
        <position position="27"/>
    </location>
    <ligand>
        <name>L-tryptophan</name>
        <dbReference type="ChEBI" id="CHEBI:57912"/>
    </ligand>
</feature>
<feature type="binding site" evidence="2">
    <location>
        <begin position="203"/>
        <end position="205"/>
    </location>
    <ligand>
        <name>L-tryptophan</name>
        <dbReference type="ChEBI" id="CHEBI:57912"/>
    </ligand>
</feature>
<feature type="binding site" evidence="2">
    <location>
        <begin position="237"/>
        <end position="238"/>
    </location>
    <ligand>
        <name>chorismate</name>
        <dbReference type="ChEBI" id="CHEBI:29748"/>
    </ligand>
</feature>
<feature type="binding site" evidence="2">
    <location>
        <position position="262"/>
    </location>
    <ligand>
        <name>Mg(2+)</name>
        <dbReference type="ChEBI" id="CHEBI:18420"/>
    </ligand>
</feature>
<feature type="binding site" evidence="2">
    <location>
        <position position="350"/>
    </location>
    <ligand>
        <name>chorismate</name>
        <dbReference type="ChEBI" id="CHEBI:29748"/>
    </ligand>
</feature>
<feature type="binding site" evidence="2">
    <location>
        <position position="369"/>
    </location>
    <ligand>
        <name>chorismate</name>
        <dbReference type="ChEBI" id="CHEBI:29748"/>
    </ligand>
</feature>
<feature type="binding site" evidence="2">
    <location>
        <begin position="382"/>
        <end position="384"/>
    </location>
    <ligand>
        <name>chorismate</name>
        <dbReference type="ChEBI" id="CHEBI:29748"/>
    </ligand>
</feature>
<feature type="binding site" evidence="2">
    <location>
        <position position="384"/>
    </location>
    <ligand>
        <name>chorismate</name>
        <dbReference type="ChEBI" id="CHEBI:29748"/>
    </ligand>
</feature>
<feature type="binding site" evidence="2">
    <location>
        <position position="397"/>
    </location>
    <ligand>
        <name>Mg(2+)</name>
        <dbReference type="ChEBI" id="CHEBI:18420"/>
    </ligand>
</feature>